<keyword id="KW-0963">Cytoplasm</keyword>
<keyword id="KW-0251">Elongation factor</keyword>
<keyword id="KW-0648">Protein biosynthesis</keyword>
<keyword id="KW-1185">Reference proteome</keyword>
<accession>Q8DIA3</accession>
<sequence>MAEISAKLVKELRDKTGAGMMDCKKALQESNGDMEAAITWLRQKGLASAGKKAGRVTSEGLVDSYIHTGGRIGVLVEVNCETDFVARNEKFKTLVQDIAKQIAACPNVEFVSLDDIPAEYKEKERQIALGSDALKGKPPEVQEKIVAGKLEKTLKELCLLYQPFIRDQSKTVEELVKEHIAELGENIRIRRFQRFVLGEGIEKQETNLAEEVAAQTQAMRAAAQTAAAAETAPPEVSEPEPAAAVTAEEPTPEPVAAAEQPAEPVSELVEQPGAESKGFGAATKKSGGKSRSNKKKK</sequence>
<feature type="chain" id="PRO_0000161216" description="Elongation factor Ts">
    <location>
        <begin position="1"/>
        <end position="297"/>
    </location>
</feature>
<feature type="region of interest" description="Involved in Mg(2+) ion dislocation from EF-Tu" evidence="1">
    <location>
        <begin position="82"/>
        <end position="85"/>
    </location>
</feature>
<feature type="region of interest" description="Disordered" evidence="2">
    <location>
        <begin position="223"/>
        <end position="297"/>
    </location>
</feature>
<feature type="compositionally biased region" description="Low complexity" evidence="2">
    <location>
        <begin position="223"/>
        <end position="265"/>
    </location>
</feature>
<feature type="compositionally biased region" description="Basic residues" evidence="2">
    <location>
        <begin position="286"/>
        <end position="297"/>
    </location>
</feature>
<dbReference type="EMBL" id="BA000039">
    <property type="protein sequence ID" value="BAC09239.1"/>
    <property type="molecule type" value="Genomic_DNA"/>
</dbReference>
<dbReference type="RefSeq" id="NP_682477.1">
    <property type="nucleotide sequence ID" value="NC_004113.1"/>
</dbReference>
<dbReference type="RefSeq" id="WP_011057524.1">
    <property type="nucleotide sequence ID" value="NC_004113.1"/>
</dbReference>
<dbReference type="SMR" id="Q8DIA3"/>
<dbReference type="STRING" id="197221.gene:10748289"/>
<dbReference type="EnsemblBacteria" id="BAC09239">
    <property type="protein sequence ID" value="BAC09239"/>
    <property type="gene ID" value="BAC09239"/>
</dbReference>
<dbReference type="KEGG" id="tel:tll1687"/>
<dbReference type="PATRIC" id="fig|197221.4.peg.1768"/>
<dbReference type="eggNOG" id="COG0264">
    <property type="taxonomic scope" value="Bacteria"/>
</dbReference>
<dbReference type="Proteomes" id="UP000000440">
    <property type="component" value="Chromosome"/>
</dbReference>
<dbReference type="GO" id="GO:0005737">
    <property type="term" value="C:cytoplasm"/>
    <property type="evidence" value="ECO:0007669"/>
    <property type="project" value="UniProtKB-SubCell"/>
</dbReference>
<dbReference type="GO" id="GO:0003746">
    <property type="term" value="F:translation elongation factor activity"/>
    <property type="evidence" value="ECO:0007669"/>
    <property type="project" value="UniProtKB-UniRule"/>
</dbReference>
<dbReference type="CDD" id="cd14275">
    <property type="entry name" value="UBA_EF-Ts"/>
    <property type="match status" value="1"/>
</dbReference>
<dbReference type="FunFam" id="1.10.286.20:FF:000001">
    <property type="entry name" value="Elongation factor Ts"/>
    <property type="match status" value="1"/>
</dbReference>
<dbReference type="FunFam" id="1.10.8.10:FF:000001">
    <property type="entry name" value="Elongation factor Ts"/>
    <property type="match status" value="1"/>
</dbReference>
<dbReference type="Gene3D" id="1.10.286.20">
    <property type="match status" value="1"/>
</dbReference>
<dbReference type="Gene3D" id="1.10.8.10">
    <property type="entry name" value="DNA helicase RuvA subunit, C-terminal domain"/>
    <property type="match status" value="1"/>
</dbReference>
<dbReference type="Gene3D" id="3.30.479.20">
    <property type="entry name" value="Elongation factor Ts, dimerisation domain"/>
    <property type="match status" value="1"/>
</dbReference>
<dbReference type="HAMAP" id="MF_00050">
    <property type="entry name" value="EF_Ts"/>
    <property type="match status" value="1"/>
</dbReference>
<dbReference type="InterPro" id="IPR036402">
    <property type="entry name" value="EF-Ts_dimer_sf"/>
</dbReference>
<dbReference type="InterPro" id="IPR001816">
    <property type="entry name" value="Transl_elong_EFTs/EF1B"/>
</dbReference>
<dbReference type="InterPro" id="IPR014039">
    <property type="entry name" value="Transl_elong_EFTs/EF1B_dimer"/>
</dbReference>
<dbReference type="InterPro" id="IPR018101">
    <property type="entry name" value="Transl_elong_Ts_CS"/>
</dbReference>
<dbReference type="InterPro" id="IPR009060">
    <property type="entry name" value="UBA-like_sf"/>
</dbReference>
<dbReference type="NCBIfam" id="TIGR00116">
    <property type="entry name" value="tsf"/>
    <property type="match status" value="1"/>
</dbReference>
<dbReference type="PANTHER" id="PTHR11741">
    <property type="entry name" value="ELONGATION FACTOR TS"/>
    <property type="match status" value="1"/>
</dbReference>
<dbReference type="PANTHER" id="PTHR11741:SF10">
    <property type="entry name" value="POLYPROTEIN OF EF-TS, CHLOROPLASTIC"/>
    <property type="match status" value="1"/>
</dbReference>
<dbReference type="Pfam" id="PF00889">
    <property type="entry name" value="EF_TS"/>
    <property type="match status" value="2"/>
</dbReference>
<dbReference type="SUPFAM" id="SSF54713">
    <property type="entry name" value="Elongation factor Ts (EF-Ts), dimerisation domain"/>
    <property type="match status" value="1"/>
</dbReference>
<dbReference type="SUPFAM" id="SSF46934">
    <property type="entry name" value="UBA-like"/>
    <property type="match status" value="1"/>
</dbReference>
<dbReference type="PROSITE" id="PS01126">
    <property type="entry name" value="EF_TS_1"/>
    <property type="match status" value="1"/>
</dbReference>
<dbReference type="PROSITE" id="PS01127">
    <property type="entry name" value="EF_TS_2"/>
    <property type="match status" value="1"/>
</dbReference>
<reference key="1">
    <citation type="journal article" date="2002" name="DNA Res.">
        <title>Complete genome structure of the thermophilic cyanobacterium Thermosynechococcus elongatus BP-1.</title>
        <authorList>
            <person name="Nakamura Y."/>
            <person name="Kaneko T."/>
            <person name="Sato S."/>
            <person name="Ikeuchi M."/>
            <person name="Katoh H."/>
            <person name="Sasamoto S."/>
            <person name="Watanabe A."/>
            <person name="Iriguchi M."/>
            <person name="Kawashima K."/>
            <person name="Kimura T."/>
            <person name="Kishida Y."/>
            <person name="Kiyokawa C."/>
            <person name="Kohara M."/>
            <person name="Matsumoto M."/>
            <person name="Matsuno A."/>
            <person name="Nakazaki N."/>
            <person name="Shimpo S."/>
            <person name="Sugimoto M."/>
            <person name="Takeuchi C."/>
            <person name="Yamada M."/>
            <person name="Tabata S."/>
        </authorList>
    </citation>
    <scope>NUCLEOTIDE SEQUENCE [LARGE SCALE GENOMIC DNA]</scope>
    <source>
        <strain>NIES-2133 / IAM M-273 / BP-1</strain>
    </source>
</reference>
<name>EFTS_THEVB</name>
<evidence type="ECO:0000255" key="1">
    <source>
        <dbReference type="HAMAP-Rule" id="MF_00050"/>
    </source>
</evidence>
<evidence type="ECO:0000256" key="2">
    <source>
        <dbReference type="SAM" id="MobiDB-lite"/>
    </source>
</evidence>
<protein>
    <recommendedName>
        <fullName evidence="1">Elongation factor Ts</fullName>
        <shortName evidence="1">EF-Ts</shortName>
    </recommendedName>
</protein>
<gene>
    <name evidence="1" type="primary">tsf</name>
    <name type="ordered locus">tll1687</name>
</gene>
<comment type="function">
    <text evidence="1">Associates with the EF-Tu.GDP complex and induces the exchange of GDP to GTP. It remains bound to the aminoacyl-tRNA.EF-Tu.GTP complex up to the GTP hydrolysis stage on the ribosome.</text>
</comment>
<comment type="subcellular location">
    <subcellularLocation>
        <location evidence="1">Cytoplasm</location>
    </subcellularLocation>
</comment>
<comment type="similarity">
    <text evidence="1">Belongs to the EF-Ts family.</text>
</comment>
<organism>
    <name type="scientific">Thermosynechococcus vestitus (strain NIES-2133 / IAM M-273 / BP-1)</name>
    <dbReference type="NCBI Taxonomy" id="197221"/>
    <lineage>
        <taxon>Bacteria</taxon>
        <taxon>Bacillati</taxon>
        <taxon>Cyanobacteriota</taxon>
        <taxon>Cyanophyceae</taxon>
        <taxon>Acaryochloridales</taxon>
        <taxon>Thermosynechococcaceae</taxon>
        <taxon>Thermosynechococcus</taxon>
    </lineage>
</organism>
<proteinExistence type="inferred from homology"/>